<organism>
    <name type="scientific">Shewanella frigidimarina (strain NCIMB 400)</name>
    <dbReference type="NCBI Taxonomy" id="318167"/>
    <lineage>
        <taxon>Bacteria</taxon>
        <taxon>Pseudomonadati</taxon>
        <taxon>Pseudomonadota</taxon>
        <taxon>Gammaproteobacteria</taxon>
        <taxon>Alteromonadales</taxon>
        <taxon>Shewanellaceae</taxon>
        <taxon>Shewanella</taxon>
    </lineage>
</organism>
<reference key="1">
    <citation type="submission" date="2006-08" db="EMBL/GenBank/DDBJ databases">
        <title>Complete sequence of Shewanella frigidimarina NCIMB 400.</title>
        <authorList>
            <consortium name="US DOE Joint Genome Institute"/>
            <person name="Copeland A."/>
            <person name="Lucas S."/>
            <person name="Lapidus A."/>
            <person name="Barry K."/>
            <person name="Detter J.C."/>
            <person name="Glavina del Rio T."/>
            <person name="Hammon N."/>
            <person name="Israni S."/>
            <person name="Dalin E."/>
            <person name="Tice H."/>
            <person name="Pitluck S."/>
            <person name="Fredrickson J.K."/>
            <person name="Kolker E."/>
            <person name="McCuel L.A."/>
            <person name="DiChristina T."/>
            <person name="Nealson K.H."/>
            <person name="Newman D."/>
            <person name="Tiedje J.M."/>
            <person name="Zhou J."/>
            <person name="Romine M.F."/>
            <person name="Culley D.E."/>
            <person name="Serres M."/>
            <person name="Chertkov O."/>
            <person name="Brettin T."/>
            <person name="Bruce D."/>
            <person name="Han C."/>
            <person name="Tapia R."/>
            <person name="Gilna P."/>
            <person name="Schmutz J."/>
            <person name="Larimer F."/>
            <person name="Land M."/>
            <person name="Hauser L."/>
            <person name="Kyrpides N."/>
            <person name="Mikhailova N."/>
            <person name="Richardson P."/>
        </authorList>
    </citation>
    <scope>NUCLEOTIDE SEQUENCE [LARGE SCALE GENOMIC DNA]</scope>
    <source>
        <strain>NCIMB 400</strain>
    </source>
</reference>
<sequence>MAELSTIARPYAKAAFDFAVEHKAVESWTEMLTFASLVSENESIKPLLNGTLASTQLATLFIKVCGEQVNEQGQNLIKVMAENGRLGILSTVSLLFAEYRNEWAKEVEADVVSATELSSEQQQQISVSLEKRLARKVKLNCSIDASLIGGVIIKSGDLVIDGSVSGKLSRLSEKLQS</sequence>
<protein>
    <recommendedName>
        <fullName evidence="1">ATP synthase subunit delta</fullName>
    </recommendedName>
    <alternativeName>
        <fullName evidence="1">ATP synthase F(1) sector subunit delta</fullName>
    </alternativeName>
    <alternativeName>
        <fullName evidence="1">F-type ATPase subunit delta</fullName>
        <shortName evidence="1">F-ATPase subunit delta</shortName>
    </alternativeName>
</protein>
<accession>Q07VU1</accession>
<keyword id="KW-0066">ATP synthesis</keyword>
<keyword id="KW-0997">Cell inner membrane</keyword>
<keyword id="KW-1003">Cell membrane</keyword>
<keyword id="KW-0139">CF(1)</keyword>
<keyword id="KW-0375">Hydrogen ion transport</keyword>
<keyword id="KW-0406">Ion transport</keyword>
<keyword id="KW-0472">Membrane</keyword>
<keyword id="KW-1185">Reference proteome</keyword>
<keyword id="KW-0813">Transport</keyword>
<feature type="chain" id="PRO_1000184790" description="ATP synthase subunit delta">
    <location>
        <begin position="1"/>
        <end position="177"/>
    </location>
</feature>
<dbReference type="EMBL" id="CP000447">
    <property type="protein sequence ID" value="ABI73873.1"/>
    <property type="molecule type" value="Genomic_DNA"/>
</dbReference>
<dbReference type="RefSeq" id="WP_011639453.1">
    <property type="nucleotide sequence ID" value="NC_008345.1"/>
</dbReference>
<dbReference type="SMR" id="Q07VU1"/>
<dbReference type="STRING" id="318167.Sfri_4048"/>
<dbReference type="KEGG" id="sfr:Sfri_4048"/>
<dbReference type="eggNOG" id="COG0712">
    <property type="taxonomic scope" value="Bacteria"/>
</dbReference>
<dbReference type="HOGENOM" id="CLU_085114_3_0_6"/>
<dbReference type="OrthoDB" id="9816221at2"/>
<dbReference type="Proteomes" id="UP000000684">
    <property type="component" value="Chromosome"/>
</dbReference>
<dbReference type="GO" id="GO:0005886">
    <property type="term" value="C:plasma membrane"/>
    <property type="evidence" value="ECO:0007669"/>
    <property type="project" value="UniProtKB-SubCell"/>
</dbReference>
<dbReference type="GO" id="GO:0045259">
    <property type="term" value="C:proton-transporting ATP synthase complex"/>
    <property type="evidence" value="ECO:0007669"/>
    <property type="project" value="UniProtKB-KW"/>
</dbReference>
<dbReference type="GO" id="GO:0046933">
    <property type="term" value="F:proton-transporting ATP synthase activity, rotational mechanism"/>
    <property type="evidence" value="ECO:0007669"/>
    <property type="project" value="UniProtKB-UniRule"/>
</dbReference>
<dbReference type="Gene3D" id="1.10.520.20">
    <property type="entry name" value="N-terminal domain of the delta subunit of the F1F0-ATP synthase"/>
    <property type="match status" value="1"/>
</dbReference>
<dbReference type="HAMAP" id="MF_01416">
    <property type="entry name" value="ATP_synth_delta_bact"/>
    <property type="match status" value="1"/>
</dbReference>
<dbReference type="InterPro" id="IPR026015">
    <property type="entry name" value="ATP_synth_OSCP/delta_N_sf"/>
</dbReference>
<dbReference type="InterPro" id="IPR020781">
    <property type="entry name" value="ATPase_OSCP/d_CS"/>
</dbReference>
<dbReference type="InterPro" id="IPR000711">
    <property type="entry name" value="ATPase_OSCP/dsu"/>
</dbReference>
<dbReference type="NCBIfam" id="TIGR01145">
    <property type="entry name" value="ATP_synt_delta"/>
    <property type="match status" value="1"/>
</dbReference>
<dbReference type="NCBIfam" id="NF004402">
    <property type="entry name" value="PRK05758.2-2"/>
    <property type="match status" value="1"/>
</dbReference>
<dbReference type="NCBIfam" id="NF004404">
    <property type="entry name" value="PRK05758.2-5"/>
    <property type="match status" value="1"/>
</dbReference>
<dbReference type="PANTHER" id="PTHR11910">
    <property type="entry name" value="ATP SYNTHASE DELTA CHAIN"/>
    <property type="match status" value="1"/>
</dbReference>
<dbReference type="Pfam" id="PF00213">
    <property type="entry name" value="OSCP"/>
    <property type="match status" value="1"/>
</dbReference>
<dbReference type="PRINTS" id="PR00125">
    <property type="entry name" value="ATPASEDELTA"/>
</dbReference>
<dbReference type="SUPFAM" id="SSF47928">
    <property type="entry name" value="N-terminal domain of the delta subunit of the F1F0-ATP synthase"/>
    <property type="match status" value="1"/>
</dbReference>
<dbReference type="PROSITE" id="PS00389">
    <property type="entry name" value="ATPASE_DELTA"/>
    <property type="match status" value="1"/>
</dbReference>
<evidence type="ECO:0000255" key="1">
    <source>
        <dbReference type="HAMAP-Rule" id="MF_01416"/>
    </source>
</evidence>
<comment type="function">
    <text evidence="1">F(1)F(0) ATP synthase produces ATP from ADP in the presence of a proton or sodium gradient. F-type ATPases consist of two structural domains, F(1) containing the extramembraneous catalytic core and F(0) containing the membrane proton channel, linked together by a central stalk and a peripheral stalk. During catalysis, ATP synthesis in the catalytic domain of F(1) is coupled via a rotary mechanism of the central stalk subunits to proton translocation.</text>
</comment>
<comment type="function">
    <text evidence="1">This protein is part of the stalk that links CF(0) to CF(1). It either transmits conformational changes from CF(0) to CF(1) or is implicated in proton conduction.</text>
</comment>
<comment type="subunit">
    <text evidence="1">F-type ATPases have 2 components, F(1) - the catalytic core - and F(0) - the membrane proton channel. F(1) has five subunits: alpha(3), beta(3), gamma(1), delta(1), epsilon(1). F(0) has three main subunits: a(1), b(2) and c(10-14). The alpha and beta chains form an alternating ring which encloses part of the gamma chain. F(1) is attached to F(0) by a central stalk formed by the gamma and epsilon chains, while a peripheral stalk is formed by the delta and b chains.</text>
</comment>
<comment type="subcellular location">
    <subcellularLocation>
        <location evidence="1">Cell inner membrane</location>
        <topology evidence="1">Peripheral membrane protein</topology>
    </subcellularLocation>
</comment>
<comment type="similarity">
    <text evidence="1">Belongs to the ATPase delta chain family.</text>
</comment>
<proteinExistence type="inferred from homology"/>
<gene>
    <name evidence="1" type="primary">atpH</name>
    <name type="ordered locus">Sfri_4048</name>
</gene>
<name>ATPD_SHEFN</name>